<name>TSYL5_MOUSE</name>
<evidence type="ECO:0000250" key="1"/>
<evidence type="ECO:0000256" key="2">
    <source>
        <dbReference type="SAM" id="MobiDB-lite"/>
    </source>
</evidence>
<evidence type="ECO:0000305" key="3"/>
<organism>
    <name type="scientific">Mus musculus</name>
    <name type="common">Mouse</name>
    <dbReference type="NCBI Taxonomy" id="10090"/>
    <lineage>
        <taxon>Eukaryota</taxon>
        <taxon>Metazoa</taxon>
        <taxon>Chordata</taxon>
        <taxon>Craniata</taxon>
        <taxon>Vertebrata</taxon>
        <taxon>Euteleostomi</taxon>
        <taxon>Mammalia</taxon>
        <taxon>Eutheria</taxon>
        <taxon>Euarchontoglires</taxon>
        <taxon>Glires</taxon>
        <taxon>Rodentia</taxon>
        <taxon>Myomorpha</taxon>
        <taxon>Muroidea</taxon>
        <taxon>Muridae</taxon>
        <taxon>Murinae</taxon>
        <taxon>Mus</taxon>
        <taxon>Mus</taxon>
    </lineage>
</organism>
<sequence length="406" mass="44303">MSGRSRGRKSSRAKGRGKGRARARVRAAAEDAWHDEKPPQSPRLGEDSAAAQVQAGAAQGGAEPAELREEAACRLPLDCGLALRARAADERGLAAPDPDLERARSLAERLTSDTSFVGTVGALAKLRRGSRIGNRRVPGRKAPDTRSATGRGPQATVSGKPKMASAGLCAAAPVGEEKKMTEKHAGAGSPATVGSMDTLETVQLKLETMNAQADRAYLRLSRKFGQLRLHHLERRNLLIQSIPGFWGQAFQNHPQLSAFLNTKDKEVLSYLNRLEVEELGLARLGYKIKFYFGRNPYFQNKVLIKEYGCGPSGQVVSRSAPIQWLPGHDLQSLSKENPENNGSFFGWFSNHSSIESDKIVEIINEDLWPNPLQYYLISEEARGEKGKEERPGPAKLSPAPAVRQPN</sequence>
<accession>Q69ZB3</accession>
<protein>
    <recommendedName>
        <fullName>Testis-specific Y-encoded-like protein 5</fullName>
        <shortName>TSPY-like protein 5</shortName>
    </recommendedName>
</protein>
<gene>
    <name type="primary">Tspyl5</name>
    <name type="synonym">Kiaa1750</name>
</gene>
<dbReference type="EMBL" id="AK173253">
    <property type="protein sequence ID" value="BAD32531.1"/>
    <property type="status" value="ALT_INIT"/>
    <property type="molecule type" value="mRNA"/>
</dbReference>
<dbReference type="CCDS" id="CCDS49591.1"/>
<dbReference type="RefSeq" id="NP_001078890.1">
    <property type="nucleotide sequence ID" value="NM_001085421.1"/>
</dbReference>
<dbReference type="SMR" id="Q69ZB3"/>
<dbReference type="FunCoup" id="Q69ZB3">
    <property type="interactions" value="175"/>
</dbReference>
<dbReference type="IntAct" id="Q69ZB3">
    <property type="interactions" value="1"/>
</dbReference>
<dbReference type="MINT" id="Q69ZB3"/>
<dbReference type="STRING" id="10090.ENSMUSP00000045542"/>
<dbReference type="iPTMnet" id="Q69ZB3"/>
<dbReference type="PhosphoSitePlus" id="Q69ZB3"/>
<dbReference type="PaxDb" id="10090-ENSMUSP00000045542"/>
<dbReference type="PeptideAtlas" id="Q69ZB3"/>
<dbReference type="ProteomicsDB" id="298154"/>
<dbReference type="Antibodypedia" id="26007">
    <property type="antibodies" value="91 antibodies from 19 providers"/>
</dbReference>
<dbReference type="Ensembl" id="ENSMUST00000042021.5">
    <property type="protein sequence ID" value="ENSMUSP00000045542.4"/>
    <property type="gene ID" value="ENSMUSG00000038984.5"/>
</dbReference>
<dbReference type="GeneID" id="239364"/>
<dbReference type="KEGG" id="mmu:239364"/>
<dbReference type="UCSC" id="uc007vld.1">
    <property type="organism name" value="mouse"/>
</dbReference>
<dbReference type="AGR" id="MGI:2442458"/>
<dbReference type="CTD" id="85453"/>
<dbReference type="MGI" id="MGI:2442458">
    <property type="gene designation" value="Tspyl5"/>
</dbReference>
<dbReference type="VEuPathDB" id="HostDB:ENSMUSG00000038984"/>
<dbReference type="eggNOG" id="KOG1508">
    <property type="taxonomic scope" value="Eukaryota"/>
</dbReference>
<dbReference type="GeneTree" id="ENSGT00940000162862"/>
<dbReference type="HOGENOM" id="CLU_051687_2_0_1"/>
<dbReference type="InParanoid" id="Q69ZB3"/>
<dbReference type="OMA" id="APETCST"/>
<dbReference type="OrthoDB" id="19419at2759"/>
<dbReference type="PhylomeDB" id="Q69ZB3"/>
<dbReference type="TreeFam" id="TF313386"/>
<dbReference type="BioGRID-ORCS" id="239364">
    <property type="hits" value="0 hits in 77 CRISPR screens"/>
</dbReference>
<dbReference type="ChiTaRS" id="Tspyl5">
    <property type="organism name" value="mouse"/>
</dbReference>
<dbReference type="PRO" id="PR:Q69ZB3"/>
<dbReference type="Proteomes" id="UP000000589">
    <property type="component" value="Chromosome 15"/>
</dbReference>
<dbReference type="RNAct" id="Q69ZB3">
    <property type="molecule type" value="protein"/>
</dbReference>
<dbReference type="Bgee" id="ENSMUSG00000038984">
    <property type="expression patterns" value="Expressed in spermatocyte and 165 other cell types or tissues"/>
</dbReference>
<dbReference type="GO" id="GO:0005634">
    <property type="term" value="C:nucleus"/>
    <property type="evidence" value="ECO:0007669"/>
    <property type="project" value="InterPro"/>
</dbReference>
<dbReference type="GO" id="GO:0071480">
    <property type="term" value="P:cellular response to gamma radiation"/>
    <property type="evidence" value="ECO:0000250"/>
    <property type="project" value="UniProtKB"/>
</dbReference>
<dbReference type="GO" id="GO:0006334">
    <property type="term" value="P:nucleosome assembly"/>
    <property type="evidence" value="ECO:0007669"/>
    <property type="project" value="InterPro"/>
</dbReference>
<dbReference type="GO" id="GO:0008284">
    <property type="term" value="P:positive regulation of cell population proliferation"/>
    <property type="evidence" value="ECO:0000250"/>
    <property type="project" value="UniProtKB"/>
</dbReference>
<dbReference type="GO" id="GO:0051897">
    <property type="term" value="P:positive regulation of phosphatidylinositol 3-kinase/protein kinase B signal transduction"/>
    <property type="evidence" value="ECO:0000250"/>
    <property type="project" value="UniProtKB"/>
</dbReference>
<dbReference type="GO" id="GO:0031398">
    <property type="term" value="P:positive regulation of protein ubiquitination"/>
    <property type="evidence" value="ECO:0000250"/>
    <property type="project" value="UniProtKB"/>
</dbReference>
<dbReference type="FunFam" id="3.30.1120.90:FF:000002">
    <property type="entry name" value="Testis-specific Y-encoded-like protein 2"/>
    <property type="match status" value="1"/>
</dbReference>
<dbReference type="FunFam" id="1.20.5.1500:FF:000008">
    <property type="entry name" value="Testis-specific Y-encoded-like protein 5"/>
    <property type="match status" value="1"/>
</dbReference>
<dbReference type="Gene3D" id="1.20.5.1500">
    <property type="match status" value="1"/>
</dbReference>
<dbReference type="Gene3D" id="3.30.1120.90">
    <property type="entry name" value="Nucleosome assembly protein"/>
    <property type="match status" value="1"/>
</dbReference>
<dbReference type="InterPro" id="IPR037231">
    <property type="entry name" value="NAP-like_sf"/>
</dbReference>
<dbReference type="InterPro" id="IPR002164">
    <property type="entry name" value="NAP_family"/>
</dbReference>
<dbReference type="PANTHER" id="PTHR11875">
    <property type="entry name" value="TESTIS-SPECIFIC Y-ENCODED PROTEIN"/>
    <property type="match status" value="1"/>
</dbReference>
<dbReference type="Pfam" id="PF00956">
    <property type="entry name" value="NAP"/>
    <property type="match status" value="1"/>
</dbReference>
<dbReference type="SUPFAM" id="SSF143113">
    <property type="entry name" value="NAP-like"/>
    <property type="match status" value="1"/>
</dbReference>
<comment type="function">
    <text evidence="1">Involved in modulation of cell growth and cellular response to gamma radiation probably via regulation of the Akt signaling pathway. Involved in regulation of p53/TP53. Suppresses p53/TP53 protein levels and promotes its ubiquitination; the function is dependent on USP7 and independent on MDM2. Proposed to displace p53/TP53 from interaction with USP7 (By similarity).</text>
</comment>
<comment type="subunit">
    <text evidence="1">Interacts with USP7.</text>
</comment>
<comment type="similarity">
    <text evidence="3">Belongs to the nucleosome assembly protein (NAP) family.</text>
</comment>
<comment type="sequence caution" evidence="3">
    <conflict type="erroneous initiation">
        <sequence resource="EMBL-CDS" id="BAD32531"/>
    </conflict>
</comment>
<reference key="1">
    <citation type="journal article" date="2004" name="DNA Res.">
        <title>Prediction of the coding sequences of mouse homologues of KIAA gene: IV. The complete nucleotide sequences of 500 mouse KIAA-homologous cDNAs identified by screening of terminal sequences of cDNA clones randomly sampled from size-fractionated libraries.</title>
        <authorList>
            <person name="Okazaki N."/>
            <person name="Kikuno R."/>
            <person name="Ohara R."/>
            <person name="Inamoto S."/>
            <person name="Koseki H."/>
            <person name="Hiraoka S."/>
            <person name="Saga Y."/>
            <person name="Seino S."/>
            <person name="Nishimura M."/>
            <person name="Kaisho T."/>
            <person name="Hoshino K."/>
            <person name="Kitamura H."/>
            <person name="Nagase T."/>
            <person name="Ohara O."/>
            <person name="Koga H."/>
        </authorList>
    </citation>
    <scope>NUCLEOTIDE SEQUENCE [LARGE SCALE MRNA]</scope>
    <source>
        <tissue>Fetal brain</tissue>
    </source>
</reference>
<keyword id="KW-0341">Growth regulation</keyword>
<keyword id="KW-1185">Reference proteome</keyword>
<proteinExistence type="evidence at transcript level"/>
<feature type="chain" id="PRO_0000307278" description="Testis-specific Y-encoded-like protein 5">
    <location>
        <begin position="1"/>
        <end position="406"/>
    </location>
</feature>
<feature type="region of interest" description="Disordered" evidence="2">
    <location>
        <begin position="1"/>
        <end position="67"/>
    </location>
</feature>
<feature type="region of interest" description="Disordered" evidence="2">
    <location>
        <begin position="132"/>
        <end position="164"/>
    </location>
</feature>
<feature type="region of interest" description="Disordered" evidence="2">
    <location>
        <begin position="382"/>
        <end position="406"/>
    </location>
</feature>
<feature type="compositionally biased region" description="Basic residues" evidence="2">
    <location>
        <begin position="1"/>
        <end position="25"/>
    </location>
</feature>
<feature type="compositionally biased region" description="Basic and acidic residues" evidence="2">
    <location>
        <begin position="27"/>
        <end position="38"/>
    </location>
</feature>
<feature type="compositionally biased region" description="Low complexity" evidence="2">
    <location>
        <begin position="49"/>
        <end position="62"/>
    </location>
</feature>
<feature type="compositionally biased region" description="Basic and acidic residues" evidence="2">
    <location>
        <begin position="382"/>
        <end position="392"/>
    </location>
</feature>